<dbReference type="EC" id="3.4.24.26"/>
<dbReference type="EMBL" id="CP000438">
    <property type="protein sequence ID" value="ABJ12957.1"/>
    <property type="molecule type" value="Genomic_DNA"/>
</dbReference>
<dbReference type="RefSeq" id="WP_003092588.1">
    <property type="nucleotide sequence ID" value="NZ_CP034244.1"/>
</dbReference>
<dbReference type="PDB" id="7NLK">
    <property type="method" value="X-ray"/>
    <property type="resolution" value="1.70 A"/>
    <property type="chains" value="A/B=198-498"/>
</dbReference>
<dbReference type="PDB" id="7NLM">
    <property type="method" value="X-ray"/>
    <property type="resolution" value="1.65 A"/>
    <property type="chains" value="A=198-495"/>
</dbReference>
<dbReference type="PDB" id="8CR4">
    <property type="method" value="X-ray"/>
    <property type="resolution" value="0.91 A"/>
    <property type="chains" value="A=24-498"/>
</dbReference>
<dbReference type="PDBsum" id="7NLK"/>
<dbReference type="PDBsum" id="7NLM"/>
<dbReference type="PDBsum" id="8CR4"/>
<dbReference type="SMR" id="Q02RJ6"/>
<dbReference type="MEROPS" id="M04.005"/>
<dbReference type="iPTMnet" id="Q02RJ6"/>
<dbReference type="KEGG" id="pau:PA14_16250"/>
<dbReference type="PseudoCAP" id="PA14_16250"/>
<dbReference type="HOGENOM" id="CLU_008590_4_2_6"/>
<dbReference type="BioCyc" id="PAER208963:G1G74-1337-MONOMER"/>
<dbReference type="BRENDA" id="3.4.24.26">
    <property type="organism ID" value="5087"/>
</dbReference>
<dbReference type="Proteomes" id="UP000000653">
    <property type="component" value="Chromosome"/>
</dbReference>
<dbReference type="GO" id="GO:0005576">
    <property type="term" value="C:extracellular region"/>
    <property type="evidence" value="ECO:0007669"/>
    <property type="project" value="UniProtKB-SubCell"/>
</dbReference>
<dbReference type="GO" id="GO:0046872">
    <property type="term" value="F:metal ion binding"/>
    <property type="evidence" value="ECO:0007669"/>
    <property type="project" value="UniProtKB-KW"/>
</dbReference>
<dbReference type="GO" id="GO:0004222">
    <property type="term" value="F:metalloendopeptidase activity"/>
    <property type="evidence" value="ECO:0007669"/>
    <property type="project" value="InterPro"/>
</dbReference>
<dbReference type="GO" id="GO:0006508">
    <property type="term" value="P:proteolysis"/>
    <property type="evidence" value="ECO:0007669"/>
    <property type="project" value="UniProtKB-KW"/>
</dbReference>
<dbReference type="CDD" id="cd09597">
    <property type="entry name" value="M4_TLP"/>
    <property type="match status" value="1"/>
</dbReference>
<dbReference type="FunFam" id="3.10.170.10:FF:000002">
    <property type="entry name" value="Elastase"/>
    <property type="match status" value="1"/>
</dbReference>
<dbReference type="Gene3D" id="3.10.170.10">
    <property type="match status" value="1"/>
</dbReference>
<dbReference type="Gene3D" id="3.10.450.40">
    <property type="match status" value="1"/>
</dbReference>
<dbReference type="Gene3D" id="3.10.450.490">
    <property type="match status" value="1"/>
</dbReference>
<dbReference type="Gene3D" id="1.10.390.10">
    <property type="entry name" value="Neutral Protease Domain 2"/>
    <property type="match status" value="1"/>
</dbReference>
<dbReference type="InterPro" id="IPR011096">
    <property type="entry name" value="FTP_domain"/>
</dbReference>
<dbReference type="InterPro" id="IPR025711">
    <property type="entry name" value="PepSY"/>
</dbReference>
<dbReference type="InterPro" id="IPR023612">
    <property type="entry name" value="Peptidase_M4"/>
</dbReference>
<dbReference type="InterPro" id="IPR027268">
    <property type="entry name" value="Peptidase_M4/M1_CTD_sf"/>
</dbReference>
<dbReference type="InterPro" id="IPR001570">
    <property type="entry name" value="Peptidase_M4_C_domain"/>
</dbReference>
<dbReference type="InterPro" id="IPR013856">
    <property type="entry name" value="Peptidase_M4_domain"/>
</dbReference>
<dbReference type="InterPro" id="IPR050728">
    <property type="entry name" value="Zinc_Metalloprotease_M4"/>
</dbReference>
<dbReference type="PANTHER" id="PTHR33794">
    <property type="entry name" value="BACILLOLYSIN"/>
    <property type="match status" value="1"/>
</dbReference>
<dbReference type="PANTHER" id="PTHR33794:SF1">
    <property type="entry name" value="BACILLOLYSIN"/>
    <property type="match status" value="1"/>
</dbReference>
<dbReference type="Pfam" id="PF07504">
    <property type="entry name" value="FTP"/>
    <property type="match status" value="1"/>
</dbReference>
<dbReference type="Pfam" id="PF03413">
    <property type="entry name" value="PepSY"/>
    <property type="match status" value="1"/>
</dbReference>
<dbReference type="Pfam" id="PF01447">
    <property type="entry name" value="Peptidase_M4"/>
    <property type="match status" value="1"/>
</dbReference>
<dbReference type="Pfam" id="PF02868">
    <property type="entry name" value="Peptidase_M4_C"/>
    <property type="match status" value="1"/>
</dbReference>
<dbReference type="PRINTS" id="PR00730">
    <property type="entry name" value="THERMOLYSIN"/>
</dbReference>
<dbReference type="SUPFAM" id="SSF55486">
    <property type="entry name" value="Metalloproteases ('zincins'), catalytic domain"/>
    <property type="match status" value="1"/>
</dbReference>
<dbReference type="PROSITE" id="PS00142">
    <property type="entry name" value="ZINC_PROTEASE"/>
    <property type="match status" value="1"/>
</dbReference>
<protein>
    <recommendedName>
        <fullName>Elastase</fullName>
        <ecNumber>3.4.24.26</ecNumber>
    </recommendedName>
    <component>
        <recommendedName>
            <fullName>Pro-elastase</fullName>
        </recommendedName>
    </component>
</protein>
<comment type="function">
    <text evidence="1">Cleaves host elastase, collagen, IgI and several complement components as well as endogenous pro-aminopeptidase, pro-chitin-binding protein (cbpD). Cleaves its own pro-peptide. Involved in the pathogenesis of P.aeruginosa infections.</text>
</comment>
<comment type="catalytic activity">
    <reaction>
        <text>Hydrolysis of proteins including elastin, collagen types III and IV, fibronectin and immunoglobulin A, generally with bulky hydrophobic group at P1'. Insulin B chain cleavage pattern identical to that of thermolysin, but specificity differs in other respects.</text>
        <dbReference type="EC" id="3.4.24.26"/>
    </reaction>
</comment>
<comment type="cofactor">
    <cofactor evidence="1">
        <name>Ca(2+)</name>
        <dbReference type="ChEBI" id="CHEBI:29108"/>
    </cofactor>
    <text evidence="1">Binds 1 Ca(2+) ion per subunit.</text>
</comment>
<comment type="cofactor">
    <cofactor evidence="1">
        <name>Zn(2+)</name>
        <dbReference type="ChEBI" id="CHEBI:29105"/>
    </cofactor>
    <text evidence="1">Binds 1 Zn(2+) ion per subunit.</text>
</comment>
<comment type="subcellular location">
    <subcellularLocation>
        <location evidence="3">Secreted</location>
    </subcellularLocation>
</comment>
<comment type="PTM">
    <text evidence="1">Made as a pre-pro-protein which is exported to the periplasm. Probably autocatalyzes cleavage of its pro-peptide. The pro-peptide can be secreted with mature elastase.</text>
</comment>
<comment type="similarity">
    <text evidence="4">Belongs to the peptidase M4 family.</text>
</comment>
<gene>
    <name type="primary">lasB</name>
    <name type="ordered locus">PA14_16250</name>
</gene>
<proteinExistence type="evidence at protein level"/>
<organism>
    <name type="scientific">Pseudomonas aeruginosa (strain UCBPP-PA14)</name>
    <dbReference type="NCBI Taxonomy" id="208963"/>
    <lineage>
        <taxon>Bacteria</taxon>
        <taxon>Pseudomonadati</taxon>
        <taxon>Pseudomonadota</taxon>
        <taxon>Gammaproteobacteria</taxon>
        <taxon>Pseudomonadales</taxon>
        <taxon>Pseudomonadaceae</taxon>
        <taxon>Pseudomonas</taxon>
    </lineage>
</organism>
<keyword id="KW-0002">3D-structure</keyword>
<keyword id="KW-0068">Autocatalytic cleavage</keyword>
<keyword id="KW-0106">Calcium</keyword>
<keyword id="KW-1015">Disulfide bond</keyword>
<keyword id="KW-0378">Hydrolase</keyword>
<keyword id="KW-0479">Metal-binding</keyword>
<keyword id="KW-0482">Metalloprotease</keyword>
<keyword id="KW-0597">Phosphoprotein</keyword>
<keyword id="KW-0645">Protease</keyword>
<keyword id="KW-0964">Secreted</keyword>
<keyword id="KW-0732">Signal</keyword>
<keyword id="KW-0843">Virulence</keyword>
<keyword id="KW-0862">Zinc</keyword>
<keyword id="KW-0865">Zymogen</keyword>
<sequence>MKKVSTLDLLFVAIMGVSPAAFAADLIDVSKLPSKAAQGAPGPVTLQAAVGAGGADELKAIRSTTLPNGKQVTRYEQFHNGVRVVGEAITEVKGPGKSVAARRSGHFVANIAADLPGSTTAAVSAEQVLAQAKSLKAQGRKTENDKVELVIRLGENNIAQLVYNVSYLIPGEGLSRPHFVIDAKTGEVLDQWEGLAHAEAGGPGGNQKIGKYTYGSDYGPLIVNDRCEMDDGNVITVDMNGSTNDSKTTPFRFACPTNTYKQVNGAYSPLNDAHFFGGVVFNLYRDWFGTSPLTHKLYMKVHYGRSVENAYWDGTAMLFGDGATMFYPLVSLDVAAHEVSHGFTEQNSGLIYRGQSGGMNEAFSDMAGEAAEFYMRGKNDFLIGYDIKKGSGALRYMDQPSRDGRSIDNASQYYNGIDVHHSSGVYNRAFYLLANSPGWDTRKAFEVFVDANRYYWTATSNYNSGACGVISSAQNRNYSAADVTRAFSTVGVTCPSAL</sequence>
<reference key="1">
    <citation type="journal article" date="2006" name="Genome Biol.">
        <title>Genomic analysis reveals that Pseudomonas aeruginosa virulence is combinatorial.</title>
        <authorList>
            <person name="Lee D.G."/>
            <person name="Urbach J.M."/>
            <person name="Wu G."/>
            <person name="Liberati N.T."/>
            <person name="Feinbaum R.L."/>
            <person name="Miyata S."/>
            <person name="Diggins L.T."/>
            <person name="He J."/>
            <person name="Saucier M."/>
            <person name="Deziel E."/>
            <person name="Friedman L."/>
            <person name="Li L."/>
            <person name="Grills G."/>
            <person name="Montgomery K."/>
            <person name="Kucherlapati R."/>
            <person name="Rahme L.G."/>
            <person name="Ausubel F.M."/>
        </authorList>
    </citation>
    <scope>NUCLEOTIDE SEQUENCE [LARGE SCALE GENOMIC DNA]</scope>
    <source>
        <strain>UCBPP-PA14</strain>
    </source>
</reference>
<reference key="2">
    <citation type="journal article" date="2014" name="Proteomics">
        <title>Extracellular Ser/Thr/Tyr phosphorylated proteins of Pseudomonas aeruginosa PA14 strain.</title>
        <authorList>
            <person name="Ouidir T."/>
            <person name="Jarnier F."/>
            <person name="Cosette P."/>
            <person name="Jouenne T."/>
            <person name="Hardouin J."/>
        </authorList>
    </citation>
    <scope>IDENTIFICATION BY MASS SPECTROMETRY</scope>
    <scope>SUBCELLULAR LOCATION</scope>
    <scope>PHOSPHORYLATION AT THR-236</scope>
    <source>
        <strain>UCBPP-PA14</strain>
    </source>
</reference>
<feature type="signal peptide" evidence="2">
    <location>
        <begin position="1"/>
        <end position="23"/>
    </location>
</feature>
<feature type="chain" id="PRO_0000431338" description="Pro-elastase" evidence="1">
    <location>
        <begin position="24"/>
        <end position="498"/>
    </location>
</feature>
<feature type="propeptide" id="PRO_0000431339" evidence="1">
    <location>
        <begin position="24"/>
        <end position="197"/>
    </location>
</feature>
<feature type="chain" id="PRO_0000431340" description="Elastase" evidence="1">
    <location>
        <begin position="198"/>
        <end position="498"/>
    </location>
</feature>
<feature type="active site" evidence="1">
    <location>
        <position position="338"/>
    </location>
</feature>
<feature type="active site" description="Proton donor" evidence="1">
    <location>
        <position position="420"/>
    </location>
</feature>
<feature type="binding site" evidence="1">
    <location>
        <position position="333"/>
    </location>
    <ligand>
        <name>Ca(2+)</name>
        <dbReference type="ChEBI" id="CHEBI:29108"/>
    </ligand>
</feature>
<feature type="binding site" evidence="1">
    <location>
        <position position="337"/>
    </location>
    <ligand>
        <name>Zn(2+)</name>
        <dbReference type="ChEBI" id="CHEBI:29105"/>
        <note>catalytic</note>
    </ligand>
</feature>
<feature type="binding site" evidence="1">
    <location>
        <position position="341"/>
    </location>
    <ligand>
        <name>Zn(2+)</name>
        <dbReference type="ChEBI" id="CHEBI:29105"/>
        <note>catalytic</note>
    </ligand>
</feature>
<feature type="binding site" evidence="1">
    <location>
        <position position="361"/>
    </location>
    <ligand>
        <name>Zn(2+)</name>
        <dbReference type="ChEBI" id="CHEBI:29105"/>
        <note>catalytic</note>
    </ligand>
</feature>
<feature type="binding site" evidence="1">
    <location>
        <position position="369"/>
    </location>
    <ligand>
        <name>Ca(2+)</name>
        <dbReference type="ChEBI" id="CHEBI:29108"/>
    </ligand>
</feature>
<feature type="binding site" evidence="1">
    <location>
        <position position="372"/>
    </location>
    <ligand>
        <name>Ca(2+)</name>
        <dbReference type="ChEBI" id="CHEBI:29108"/>
    </ligand>
</feature>
<feature type="binding site" evidence="1">
    <location>
        <position position="380"/>
    </location>
    <ligand>
        <name>Ca(2+)</name>
        <dbReference type="ChEBI" id="CHEBI:29108"/>
    </ligand>
</feature>
<feature type="binding site" evidence="1">
    <location>
        <position position="382"/>
    </location>
    <ligand>
        <name>Ca(2+)</name>
        <dbReference type="ChEBI" id="CHEBI:29108"/>
    </ligand>
</feature>
<feature type="site" description="Cleavage; by autolysis" evidence="1">
    <location>
        <begin position="197"/>
        <end position="198"/>
    </location>
</feature>
<feature type="modified residue" description="Phosphothreonine" evidence="3">
    <location>
        <position position="236"/>
    </location>
</feature>
<feature type="disulfide bond" evidence="1">
    <location>
        <begin position="227"/>
        <end position="255"/>
    </location>
</feature>
<feature type="disulfide bond" evidence="1">
    <location>
        <begin position="467"/>
        <end position="494"/>
    </location>
</feature>
<feature type="strand" evidence="6">
    <location>
        <begin position="199"/>
        <end position="206"/>
    </location>
</feature>
<feature type="turn" evidence="6">
    <location>
        <begin position="207"/>
        <end position="209"/>
    </location>
</feature>
<feature type="strand" evidence="6">
    <location>
        <begin position="210"/>
        <end position="214"/>
    </location>
</feature>
<feature type="turn" evidence="5">
    <location>
        <begin position="215"/>
        <end position="217"/>
    </location>
</feature>
<feature type="strand" evidence="6">
    <location>
        <begin position="227"/>
        <end position="230"/>
    </location>
</feature>
<feature type="strand" evidence="6">
    <location>
        <begin position="232"/>
        <end position="238"/>
    </location>
</feature>
<feature type="helix" evidence="6">
    <location>
        <begin position="269"/>
        <end position="288"/>
    </location>
</feature>
<feature type="strand" evidence="6">
    <location>
        <begin position="297"/>
        <end position="306"/>
    </location>
</feature>
<feature type="strand" evidence="6">
    <location>
        <begin position="310"/>
        <end position="312"/>
    </location>
</feature>
<feature type="strand" evidence="6">
    <location>
        <begin position="314"/>
        <end position="320"/>
    </location>
</feature>
<feature type="strand" evidence="6">
    <location>
        <begin position="324"/>
        <end position="327"/>
    </location>
</feature>
<feature type="helix" evidence="6">
    <location>
        <begin position="332"/>
        <end position="346"/>
    </location>
</feature>
<feature type="helix" evidence="6">
    <location>
        <begin position="354"/>
        <end position="376"/>
    </location>
</feature>
<feature type="strand" evidence="6">
    <location>
        <begin position="381"/>
        <end position="384"/>
    </location>
</feature>
<feature type="turn" evidence="6">
    <location>
        <begin position="385"/>
        <end position="387"/>
    </location>
</feature>
<feature type="strand" evidence="6">
    <location>
        <begin position="388"/>
        <end position="391"/>
    </location>
</feature>
<feature type="strand" evidence="6">
    <location>
        <begin position="394"/>
        <end position="399"/>
    </location>
</feature>
<feature type="helix" evidence="6">
    <location>
        <begin position="400"/>
        <end position="403"/>
    </location>
</feature>
<feature type="helix" evidence="6">
    <location>
        <begin position="410"/>
        <end position="412"/>
    </location>
</feature>
<feature type="helix" evidence="6">
    <location>
        <begin position="419"/>
        <end position="422"/>
    </location>
</feature>
<feature type="helix" evidence="6">
    <location>
        <begin position="424"/>
        <end position="434"/>
    </location>
</feature>
<feature type="helix" evidence="6">
    <location>
        <begin position="441"/>
        <end position="454"/>
    </location>
</feature>
<feature type="helix" evidence="6">
    <location>
        <begin position="462"/>
        <end position="475"/>
    </location>
</feature>
<feature type="helix" evidence="6">
    <location>
        <begin position="480"/>
        <end position="489"/>
    </location>
</feature>
<evidence type="ECO:0000250" key="1">
    <source>
        <dbReference type="UniProtKB" id="P14756"/>
    </source>
</evidence>
<evidence type="ECO:0000255" key="2"/>
<evidence type="ECO:0000269" key="3">
    <source>
    </source>
</evidence>
<evidence type="ECO:0000305" key="4"/>
<evidence type="ECO:0007829" key="5">
    <source>
        <dbReference type="PDB" id="7NLK"/>
    </source>
</evidence>
<evidence type="ECO:0007829" key="6">
    <source>
        <dbReference type="PDB" id="7NLM"/>
    </source>
</evidence>
<name>ELAS_PSEAB</name>
<accession>Q02RJ6</accession>